<feature type="chain" id="PRO_0000157034" description="Thiamine-phosphate synthase">
    <location>
        <begin position="1"/>
        <end position="216"/>
    </location>
</feature>
<feature type="binding site" evidence="1">
    <location>
        <begin position="40"/>
        <end position="44"/>
    </location>
    <ligand>
        <name>4-amino-2-methyl-5-(diphosphooxymethyl)pyrimidine</name>
        <dbReference type="ChEBI" id="CHEBI:57841"/>
    </ligand>
</feature>
<feature type="binding site" evidence="1">
    <location>
        <position position="72"/>
    </location>
    <ligand>
        <name>4-amino-2-methyl-5-(diphosphooxymethyl)pyrimidine</name>
        <dbReference type="ChEBI" id="CHEBI:57841"/>
    </ligand>
</feature>
<feature type="binding site" evidence="1">
    <location>
        <position position="73"/>
    </location>
    <ligand>
        <name>Mg(2+)</name>
        <dbReference type="ChEBI" id="CHEBI:18420"/>
    </ligand>
</feature>
<feature type="binding site" evidence="1">
    <location>
        <position position="92"/>
    </location>
    <ligand>
        <name>Mg(2+)</name>
        <dbReference type="ChEBI" id="CHEBI:18420"/>
    </ligand>
</feature>
<feature type="binding site" evidence="1">
    <location>
        <position position="111"/>
    </location>
    <ligand>
        <name>4-amino-2-methyl-5-(diphosphooxymethyl)pyrimidine</name>
        <dbReference type="ChEBI" id="CHEBI:57841"/>
    </ligand>
</feature>
<feature type="binding site" evidence="1">
    <location>
        <begin position="137"/>
        <end position="139"/>
    </location>
    <ligand>
        <name>2-[(2R,5Z)-2-carboxy-4-methylthiazol-5(2H)-ylidene]ethyl phosphate</name>
        <dbReference type="ChEBI" id="CHEBI:62899"/>
    </ligand>
</feature>
<feature type="binding site" evidence="1">
    <location>
        <position position="140"/>
    </location>
    <ligand>
        <name>4-amino-2-methyl-5-(diphosphooxymethyl)pyrimidine</name>
        <dbReference type="ChEBI" id="CHEBI:57841"/>
    </ligand>
</feature>
<feature type="binding site" evidence="1">
    <location>
        <position position="169"/>
    </location>
    <ligand>
        <name>2-[(2R,5Z)-2-carboxy-4-methylthiazol-5(2H)-ylidene]ethyl phosphate</name>
        <dbReference type="ChEBI" id="CHEBI:62899"/>
    </ligand>
</feature>
<feature type="binding site" evidence="1">
    <location>
        <begin position="189"/>
        <end position="190"/>
    </location>
    <ligand>
        <name>2-[(2R,5Z)-2-carboxy-4-methylthiazol-5(2H)-ylidene]ethyl phosphate</name>
        <dbReference type="ChEBI" id="CHEBI:62899"/>
    </ligand>
</feature>
<organism>
    <name type="scientific">Photorhabdus laumondii subsp. laumondii (strain DSM 15139 / CIP 105565 / TT01)</name>
    <name type="common">Photorhabdus luminescens subsp. laumondii</name>
    <dbReference type="NCBI Taxonomy" id="243265"/>
    <lineage>
        <taxon>Bacteria</taxon>
        <taxon>Pseudomonadati</taxon>
        <taxon>Pseudomonadota</taxon>
        <taxon>Gammaproteobacteria</taxon>
        <taxon>Enterobacterales</taxon>
        <taxon>Morganellaceae</taxon>
        <taxon>Photorhabdus</taxon>
    </lineage>
</organism>
<sequence>MNNLPNAPFAPTEHRLGLYPVVDSLAWISRLLQTGVTTIQLRIKDLPEDQVEEEIQQAIMLGRQYNARLFINDYWRLAIKHGAYGVHLGQEDLVIADLNAIQKTGLRLGISTHDEQELARAKSLRPSYIALGHIFPTTTKAMPSSPQGVEALKRQVENTPDYSTVAIGGISLERVPDVIATGVGSVALVSAITKAKDWRQATAQLLYLVEGIELKG</sequence>
<keyword id="KW-0460">Magnesium</keyword>
<keyword id="KW-0479">Metal-binding</keyword>
<keyword id="KW-1185">Reference proteome</keyword>
<keyword id="KW-0784">Thiamine biosynthesis</keyword>
<keyword id="KW-0808">Transferase</keyword>
<gene>
    <name evidence="1" type="primary">thiE</name>
    <name type="ordered locus">plu0485</name>
</gene>
<evidence type="ECO:0000255" key="1">
    <source>
        <dbReference type="HAMAP-Rule" id="MF_00097"/>
    </source>
</evidence>
<proteinExistence type="inferred from homology"/>
<reference key="1">
    <citation type="journal article" date="2003" name="Nat. Biotechnol.">
        <title>The genome sequence of the entomopathogenic bacterium Photorhabdus luminescens.</title>
        <authorList>
            <person name="Duchaud E."/>
            <person name="Rusniok C."/>
            <person name="Frangeul L."/>
            <person name="Buchrieser C."/>
            <person name="Givaudan A."/>
            <person name="Taourit S."/>
            <person name="Bocs S."/>
            <person name="Boursaux-Eude C."/>
            <person name="Chandler M."/>
            <person name="Charles J.-F."/>
            <person name="Dassa E."/>
            <person name="Derose R."/>
            <person name="Derzelle S."/>
            <person name="Freyssinet G."/>
            <person name="Gaudriault S."/>
            <person name="Medigue C."/>
            <person name="Lanois A."/>
            <person name="Powell K."/>
            <person name="Siguier P."/>
            <person name="Vincent R."/>
            <person name="Wingate V."/>
            <person name="Zouine M."/>
            <person name="Glaser P."/>
            <person name="Boemare N."/>
            <person name="Danchin A."/>
            <person name="Kunst F."/>
        </authorList>
    </citation>
    <scope>NUCLEOTIDE SEQUENCE [LARGE SCALE GENOMIC DNA]</scope>
    <source>
        <strain>DSM 15139 / CIP 105565 / TT01</strain>
    </source>
</reference>
<protein>
    <recommendedName>
        <fullName evidence="1">Thiamine-phosphate synthase</fullName>
        <shortName evidence="1">TP synthase</shortName>
        <shortName evidence="1">TPS</shortName>
        <ecNumber evidence="1">2.5.1.3</ecNumber>
    </recommendedName>
    <alternativeName>
        <fullName evidence="1">Thiamine-phosphate pyrophosphorylase</fullName>
        <shortName evidence="1">TMP pyrophosphorylase</shortName>
        <shortName evidence="1">TMP-PPase</shortName>
    </alternativeName>
</protein>
<comment type="function">
    <text evidence="1">Condenses 4-methyl-5-(beta-hydroxyethyl)thiazole monophosphate (THZ-P) and 2-methyl-4-amino-5-hydroxymethyl pyrimidine pyrophosphate (HMP-PP) to form thiamine monophosphate (TMP).</text>
</comment>
<comment type="catalytic activity">
    <reaction evidence="1">
        <text>2-[(2R,5Z)-2-carboxy-4-methylthiazol-5(2H)-ylidene]ethyl phosphate + 4-amino-2-methyl-5-(diphosphooxymethyl)pyrimidine + 2 H(+) = thiamine phosphate + CO2 + diphosphate</text>
        <dbReference type="Rhea" id="RHEA:47844"/>
        <dbReference type="ChEBI" id="CHEBI:15378"/>
        <dbReference type="ChEBI" id="CHEBI:16526"/>
        <dbReference type="ChEBI" id="CHEBI:33019"/>
        <dbReference type="ChEBI" id="CHEBI:37575"/>
        <dbReference type="ChEBI" id="CHEBI:57841"/>
        <dbReference type="ChEBI" id="CHEBI:62899"/>
        <dbReference type="EC" id="2.5.1.3"/>
    </reaction>
</comment>
<comment type="catalytic activity">
    <reaction evidence="1">
        <text>2-(2-carboxy-4-methylthiazol-5-yl)ethyl phosphate + 4-amino-2-methyl-5-(diphosphooxymethyl)pyrimidine + 2 H(+) = thiamine phosphate + CO2 + diphosphate</text>
        <dbReference type="Rhea" id="RHEA:47848"/>
        <dbReference type="ChEBI" id="CHEBI:15378"/>
        <dbReference type="ChEBI" id="CHEBI:16526"/>
        <dbReference type="ChEBI" id="CHEBI:33019"/>
        <dbReference type="ChEBI" id="CHEBI:37575"/>
        <dbReference type="ChEBI" id="CHEBI:57841"/>
        <dbReference type="ChEBI" id="CHEBI:62890"/>
        <dbReference type="EC" id="2.5.1.3"/>
    </reaction>
</comment>
<comment type="catalytic activity">
    <reaction evidence="1">
        <text>4-methyl-5-(2-phosphooxyethyl)-thiazole + 4-amino-2-methyl-5-(diphosphooxymethyl)pyrimidine + H(+) = thiamine phosphate + diphosphate</text>
        <dbReference type="Rhea" id="RHEA:22328"/>
        <dbReference type="ChEBI" id="CHEBI:15378"/>
        <dbReference type="ChEBI" id="CHEBI:33019"/>
        <dbReference type="ChEBI" id="CHEBI:37575"/>
        <dbReference type="ChEBI" id="CHEBI:57841"/>
        <dbReference type="ChEBI" id="CHEBI:58296"/>
        <dbReference type="EC" id="2.5.1.3"/>
    </reaction>
</comment>
<comment type="cofactor">
    <cofactor evidence="1">
        <name>Mg(2+)</name>
        <dbReference type="ChEBI" id="CHEBI:18420"/>
    </cofactor>
    <text evidence="1">Binds 1 Mg(2+) ion per subunit.</text>
</comment>
<comment type="pathway">
    <text evidence="1">Cofactor biosynthesis; thiamine diphosphate biosynthesis; thiamine phosphate from 4-amino-2-methyl-5-diphosphomethylpyrimidine and 4-methyl-5-(2-phosphoethyl)-thiazole: step 1/1.</text>
</comment>
<comment type="similarity">
    <text evidence="1">Belongs to the thiamine-phosphate synthase family.</text>
</comment>
<dbReference type="EC" id="2.5.1.3" evidence="1"/>
<dbReference type="EMBL" id="BX571860">
    <property type="protein sequence ID" value="CAE12780.1"/>
    <property type="molecule type" value="Genomic_DNA"/>
</dbReference>
<dbReference type="RefSeq" id="WP_011144870.1">
    <property type="nucleotide sequence ID" value="NC_005126.1"/>
</dbReference>
<dbReference type="SMR" id="Q7N964"/>
<dbReference type="STRING" id="243265.plu0485"/>
<dbReference type="GeneID" id="48846770"/>
<dbReference type="KEGG" id="plu:plu0485"/>
<dbReference type="eggNOG" id="COG0352">
    <property type="taxonomic scope" value="Bacteria"/>
</dbReference>
<dbReference type="HOGENOM" id="CLU_018272_3_3_6"/>
<dbReference type="OrthoDB" id="9810880at2"/>
<dbReference type="UniPathway" id="UPA00060">
    <property type="reaction ID" value="UER00141"/>
</dbReference>
<dbReference type="Proteomes" id="UP000002514">
    <property type="component" value="Chromosome"/>
</dbReference>
<dbReference type="GO" id="GO:0005737">
    <property type="term" value="C:cytoplasm"/>
    <property type="evidence" value="ECO:0007669"/>
    <property type="project" value="TreeGrafter"/>
</dbReference>
<dbReference type="GO" id="GO:0000287">
    <property type="term" value="F:magnesium ion binding"/>
    <property type="evidence" value="ECO:0007669"/>
    <property type="project" value="UniProtKB-UniRule"/>
</dbReference>
<dbReference type="GO" id="GO:0004789">
    <property type="term" value="F:thiamine-phosphate diphosphorylase activity"/>
    <property type="evidence" value="ECO:0007669"/>
    <property type="project" value="UniProtKB-UniRule"/>
</dbReference>
<dbReference type="GO" id="GO:0009228">
    <property type="term" value="P:thiamine biosynthetic process"/>
    <property type="evidence" value="ECO:0007669"/>
    <property type="project" value="UniProtKB-KW"/>
</dbReference>
<dbReference type="GO" id="GO:0009229">
    <property type="term" value="P:thiamine diphosphate biosynthetic process"/>
    <property type="evidence" value="ECO:0007669"/>
    <property type="project" value="UniProtKB-UniRule"/>
</dbReference>
<dbReference type="CDD" id="cd00564">
    <property type="entry name" value="TMP_TenI"/>
    <property type="match status" value="1"/>
</dbReference>
<dbReference type="FunFam" id="3.20.20.70:FF:000064">
    <property type="entry name" value="Thiamine-phosphate synthase"/>
    <property type="match status" value="1"/>
</dbReference>
<dbReference type="Gene3D" id="3.20.20.70">
    <property type="entry name" value="Aldolase class I"/>
    <property type="match status" value="1"/>
</dbReference>
<dbReference type="HAMAP" id="MF_00097">
    <property type="entry name" value="TMP_synthase"/>
    <property type="match status" value="1"/>
</dbReference>
<dbReference type="InterPro" id="IPR013785">
    <property type="entry name" value="Aldolase_TIM"/>
</dbReference>
<dbReference type="InterPro" id="IPR036206">
    <property type="entry name" value="ThiamineP_synth_sf"/>
</dbReference>
<dbReference type="InterPro" id="IPR022998">
    <property type="entry name" value="ThiamineP_synth_TenI"/>
</dbReference>
<dbReference type="InterPro" id="IPR034291">
    <property type="entry name" value="TMP_synthase"/>
</dbReference>
<dbReference type="NCBIfam" id="NF002904">
    <property type="entry name" value="PRK03512.1"/>
    <property type="match status" value="1"/>
</dbReference>
<dbReference type="NCBIfam" id="TIGR00693">
    <property type="entry name" value="thiE"/>
    <property type="match status" value="1"/>
</dbReference>
<dbReference type="PANTHER" id="PTHR20857">
    <property type="entry name" value="THIAMINE-PHOSPHATE PYROPHOSPHORYLASE"/>
    <property type="match status" value="1"/>
</dbReference>
<dbReference type="PANTHER" id="PTHR20857:SF15">
    <property type="entry name" value="THIAMINE-PHOSPHATE SYNTHASE"/>
    <property type="match status" value="1"/>
</dbReference>
<dbReference type="Pfam" id="PF02581">
    <property type="entry name" value="TMP-TENI"/>
    <property type="match status" value="1"/>
</dbReference>
<dbReference type="SUPFAM" id="SSF51391">
    <property type="entry name" value="Thiamin phosphate synthase"/>
    <property type="match status" value="1"/>
</dbReference>
<accession>Q7N964</accession>
<name>THIE_PHOLL</name>